<reference key="1">
    <citation type="journal article" date="1987" name="Virology">
        <title>Sequence relationships of type D retroviruses which cause simian acquired immunodeficiency syndrome.</title>
        <authorList>
            <person name="Thayer R.M."/>
            <person name="Power M.D."/>
            <person name="Bryant M.L."/>
            <person name="Gardner M.B."/>
            <person name="Barr P.J."/>
            <person name="Luciw P.A."/>
        </authorList>
    </citation>
    <scope>NUCLEOTIDE SEQUENCE [GENOMIC RNA]</scope>
</reference>
<reference key="2">
    <citation type="journal article" date="2013" name="Biomed. Res. Int.">
        <title>A genome-wide analysis of RNA pseudoknots that stimulate efficient -1 ribosomal frameshifting or readthrough in animal viruses.</title>
        <authorList>
            <person name="Huang X."/>
            <person name="Cheng Q."/>
            <person name="Du Z."/>
        </authorList>
    </citation>
    <scope>RIBOSOMAL FRAMESHIFT</scope>
</reference>
<protein>
    <recommendedName>
        <fullName>Gag-Pro polyprotein</fullName>
    </recommendedName>
    <component>
        <recommendedName>
            <fullName>Matrix protein p10</fullName>
        </recommendedName>
    </component>
    <component>
        <recommendedName>
            <fullName>Phosphorylated protein pp24</fullName>
        </recommendedName>
    </component>
    <component>
        <recommendedName>
            <fullName>Phosphorylated protein pp18</fullName>
        </recommendedName>
    </component>
    <component>
        <recommendedName>
            <fullName>p12</fullName>
        </recommendedName>
    </component>
    <component>
        <recommendedName>
            <fullName>Capsid protein p27</fullName>
        </recommendedName>
    </component>
    <component>
        <recommendedName>
            <fullName>Nucleocapsid protein-dUTPase</fullName>
            <shortName>NC-dUTPase</shortName>
            <ecNumber evidence="2">3.6.1.23</ecNumber>
        </recommendedName>
    </component>
    <component>
        <recommendedName>
            <fullName evidence="2">Protease 17 kDa</fullName>
            <ecNumber evidence="7">3.4.23.-</ecNumber>
        </recommendedName>
    </component>
    <component>
        <recommendedName>
            <fullName evidence="2">Protease 13 kDa</fullName>
            <ecNumber evidence="7">3.4.23.-</ecNumber>
        </recommendedName>
    </component>
    <component>
        <recommendedName>
            <fullName evidence="2">G-patch peptide</fullName>
        </recommendedName>
    </component>
</protein>
<gene>
    <name type="primary">pro</name>
    <name type="synonym">prt</name>
</gene>
<accession>P51518</accession>
<name>PRO_SRV2</name>
<comment type="function">
    <molecule>Matrix protein p10</molecule>
    <text evidence="9">Matrix protein.</text>
</comment>
<comment type="function">
    <text evidence="9">Nucleocapsid protein p14: Nucleocapsid protein.</text>
</comment>
<comment type="function">
    <molecule>Capsid protein p27</molecule>
    <text evidence="9">Capsid protein.</text>
</comment>
<comment type="function">
    <molecule>Protease 17 kDa</molecule>
    <text evidence="2 7">The aspartyl protease mediates proteolytic cleavages of Gag and Gag-Pol polyproteins during or shortly after the release of the virion from the plasma membrane. Cleavages take place as an ordered, step-wise cascade to yield mature proteins. This process is called maturation. Displays maximal activity during the budding process just prior to particle release from the cell.</text>
</comment>
<comment type="function">
    <molecule>Protease 13 kDa</molecule>
    <text evidence="2 7">The aspartyl protease mediates proteolytic cleavages of Gag and Gag-Pol polyproteins during or shortly after the release of the virion from the plasma membrane. Cleavages take place as an ordered, step-wise cascade to yield mature proteins. This process is called maturation. Displays maximal activity during the budding process just prior to particle release from the cell.</text>
</comment>
<comment type="function">
    <molecule>G-patch peptide</molecule>
    <text evidence="2">Enhances the activity of the reverse transcriptase. May be part of the mature RT.</text>
</comment>
<comment type="catalytic activity">
    <reaction evidence="2">
        <text>dUTP + H2O = dUMP + diphosphate + H(+)</text>
        <dbReference type="Rhea" id="RHEA:10248"/>
        <dbReference type="ChEBI" id="CHEBI:15377"/>
        <dbReference type="ChEBI" id="CHEBI:15378"/>
        <dbReference type="ChEBI" id="CHEBI:33019"/>
        <dbReference type="ChEBI" id="CHEBI:61555"/>
        <dbReference type="ChEBI" id="CHEBI:246422"/>
        <dbReference type="EC" id="3.6.1.23"/>
    </reaction>
</comment>
<comment type="subunit">
    <molecule>Protease 17 kDa</molecule>
    <text evidence="2">Homodimer.</text>
</comment>
<comment type="subunit">
    <molecule>G-patch peptide</molecule>
    <text evidence="2">Interacts with the reverse transcriptase/ribonuclease H.</text>
</comment>
<comment type="subunit">
    <molecule>Nucleocapsid protein-dUTPase</molecule>
    <text evidence="2">Homotrimer.</text>
</comment>
<comment type="subcellular location">
    <molecule>Matrix protein p10</molecule>
    <subcellularLocation>
        <location evidence="9">Virion</location>
    </subcellularLocation>
</comment>
<comment type="subcellular location">
    <molecule>Capsid protein p27</molecule>
    <subcellularLocation>
        <location evidence="9">Virion</location>
    </subcellularLocation>
</comment>
<comment type="subcellular location">
    <molecule>Nucleocapsid protein-dUTPase</molecule>
    <subcellularLocation>
        <location evidence="9">Virion</location>
    </subcellularLocation>
</comment>
<comment type="subcellular location">
    <molecule>Protease 13 kDa</molecule>
    <subcellularLocation>
        <location evidence="2">Virion</location>
    </subcellularLocation>
</comment>
<comment type="subcellular location">
    <molecule>Protease 17 kDa</molecule>
    <subcellularLocation>
        <location evidence="2">Virion</location>
    </subcellularLocation>
</comment>
<comment type="alternative products">
    <event type="ribosomal frameshifting"/>
    <isoform>
        <id>P51518-1</id>
        <name>Gag-Pro polyprotein</name>
        <sequence type="displayed"/>
    </isoform>
    <isoform>
        <id>P51516-1</id>
        <name>Gag polyprotein</name>
        <sequence type="external"/>
    </isoform>
    <isoform>
        <id>P51517-1</id>
        <name>Gag-Pro-Pol polyprotein</name>
        <sequence type="external"/>
    </isoform>
</comment>
<comment type="domain">
    <text evidence="2">Gag polyprotein: Late-budding domains (L domains) are short sequence motifs essential for viral particle release. They can occur individually or in close proximity within structural proteins. They interacts with sorting cellular proteins of the multivesicular body (MVB) pathway. Most of these proteins are class E vacuolar protein sorting factors belonging to ESCRT-I, ESCRT-II or ESCRT-III complexes. Phosphorylated protein pp24 and phosphorylated protein pp18 contains one L domain: a PPXY motif which binds to the WW domains of the ubiquitin ligase NEDD4.</text>
</comment>
<comment type="domain">
    <molecule>Protease 17 kDa</molecule>
    <text evidence="2">The glycine-rich G-patch domain (GPD) is present at the C-terminus of the protease from which it is then detached by the protease itself.</text>
</comment>
<comment type="PTM">
    <molecule>Protease 17 kDa</molecule>
    <text evidence="2">Released by autocatalytic processing. The protease can undergo further autoprocessing to yield 2 shorter but enzymatically active forms of 12 kDa and 13 kDa without the GDP domain.</text>
</comment>
<comment type="PTM">
    <molecule>Gag-Pro polyprotein</molecule>
    <text evidence="3">Myristoylated. Myristoylation of the matrix (MA) domain mediates the transport and binding of Gag polyproteins to the host plasma membrane and is required for the assembly of viral particles.</text>
</comment>
<comment type="PTM">
    <molecule>Gag-Pro polyprotein</molecule>
    <text evidence="2">Specific enzymatic cleavages in vivo yield mature proteins.</text>
</comment>
<comment type="miscellaneous">
    <molecule>Isoform Gag-Pro polyprotein</molecule>
    <text evidence="10">Produced by -1 ribosomal frameshifting between gag-pro.</text>
</comment>
<sequence length="908" mass="100877">MGQELSQHELYVEQLKKALKTRGVKVKGNDLLKFFDFVKDTCPWFPQEGTIDIKRWRRVGDCFQDYYNTFGPEKIPVTAFSYWNLIKDLIDKKEADPQVMAAVTQTEKILKVSSQTDLRDNSHNKDMDLISLESDDEEAKAPSEKMTMSNKSPKKYPAMLASQNNNTDKDPDLSEVDWDGLEDEAAKYHNPDWPPFLSRPPPYNRTAATAPAVMAVVNPKEELKEKISQLEEQIKLEELHQSLIIRLQKLKTGNERVTSSGNIESHSRTPKWPGQCLPKGKYLINKNTEEYPPKDIFPVTETMDGQGQAWRHHNGFDFTVIKELKTAVSQYGATAPYTLAIVESIADNWLTPTDWNTLVRAVLSGGDHLIWKSEFFENCRDTAKRNQQAGNGWDFDMLTGSGNYANTDAQMQYDPGLFAQIQAAATNAWRKLPVKGDPGASLTGVKQGPDEPFADFVHRLITTAGRIFGNAEAGVDYVKQLAYENANPACQAAIRPYRKKTDLTGYIRLCSDIGPSYQQGLAMAAAFSGQTVKDLLNNKNKDRGGCFKCGKKGHFAKDCRDHSNKNPESKVPGLCPRCKRGKHWANECKSKTDSQGNPLPPHQGNRDEGPAPGPEASLWGSQLCSSQQQQSISKLNRASPGSAGLDLCSTTHTVLTPEMGPQTLATGVYGPLPPNTFGLILGRGSTTVKGLQIYPGVIDNDYTGEFKIMARAISSIITIPQGERIAQLVLLPLLRTAHKIQHPYRGDKNFGSSDIFWVQPITHQKPSLVLWLDGKAFTGLIDTGADVTIIKQEDWPSHWPTTETLTNLRGIGQSNNPRQSSKYLTWKDKENNSGLIKPFVIPNLPVNLWGRDLLSQMKIMMCSPNDIVTAQMLAQGYSPGKGLGKREDGILQPIPNSGQLDRKGFGNF</sequence>
<feature type="initiator methionine" description="Removed; by host" evidence="1">
    <location>
        <position position="1"/>
    </location>
</feature>
<feature type="chain" id="PRO_0000199552" description="Gag-Pro polyprotein">
    <location>
        <begin position="2"/>
        <end position="908"/>
    </location>
</feature>
<feature type="chain" id="PRO_0000443216" description="Matrix protein p10" evidence="2">
    <location>
        <begin position="2"/>
        <end position="100"/>
    </location>
</feature>
<feature type="chain" id="PRO_0000443217" description="Phosphorylated protein pp24" evidence="2">
    <location>
        <begin position="101"/>
        <end position="213"/>
    </location>
</feature>
<feature type="propeptide" id="PRO_0000443218" evidence="2">
    <location>
        <begin position="101"/>
        <end position="159"/>
    </location>
</feature>
<feature type="chain" id="PRO_0000443219" description="Phosphorylated protein pp18" evidence="2">
    <location>
        <begin position="160"/>
        <end position="213"/>
    </location>
</feature>
<feature type="chain" id="PRO_0000443220" description="p12" evidence="2">
    <location>
        <begin position="214"/>
        <end position="297"/>
    </location>
</feature>
<feature type="chain" id="PRO_0000443221" description="Capsid protein p27" evidence="2">
    <location>
        <begin position="298"/>
        <end position="523"/>
    </location>
</feature>
<feature type="chain" id="PRO_0000443222" description="Nucleocapsid protein-dUTPase" evidence="2">
    <location>
        <begin position="524"/>
        <end position="756"/>
    </location>
</feature>
<feature type="chain" id="PRO_0000443223" description="Protease 17 kDa" evidence="2">
    <location>
        <begin position="757"/>
        <end position="908"/>
    </location>
</feature>
<feature type="chain" id="PRO_0000443224" description="Protease 13 kDa" evidence="2">
    <location>
        <begin position="757"/>
        <end position="874"/>
    </location>
</feature>
<feature type="peptide" id="PRO_0000443225" description="G-patch peptide">
    <location>
        <begin position="875"/>
        <end position="908"/>
    </location>
</feature>
<feature type="domain" description="Peptidase A2" evidence="7">
    <location>
        <begin position="777"/>
        <end position="853"/>
    </location>
</feature>
<feature type="domain" description="G-patch" evidence="6">
    <location>
        <begin position="864"/>
        <end position="908"/>
    </location>
</feature>
<feature type="zinc finger region" description="CCHC-type" evidence="5">
    <location>
        <begin position="544"/>
        <end position="561"/>
    </location>
</feature>
<feature type="region of interest" description="Disordered" evidence="8">
    <location>
        <begin position="132"/>
        <end position="152"/>
    </location>
</feature>
<feature type="region of interest" description="Disordered" evidence="8">
    <location>
        <begin position="589"/>
        <end position="622"/>
    </location>
</feature>
<feature type="region of interest" description="Disordered" evidence="8">
    <location>
        <begin position="884"/>
        <end position="908"/>
    </location>
</feature>
<feature type="coiled-coil region" evidence="4">
    <location>
        <begin position="215"/>
        <end position="251"/>
    </location>
</feature>
<feature type="short sequence motif" description="PPXY motif" evidence="2">
    <location>
        <begin position="200"/>
        <end position="203"/>
    </location>
</feature>
<feature type="short sequence motif" description="PTAP/PSAP motif" evidence="2">
    <location>
        <begin position="208"/>
        <end position="211"/>
    </location>
</feature>
<feature type="active site" description="Protease; shared with dimeric partner" evidence="7">
    <location>
        <position position="782"/>
    </location>
</feature>
<feature type="site" description="Cleavage; by viral protease" evidence="1">
    <location>
        <begin position="100"/>
        <end position="101"/>
    </location>
</feature>
<feature type="site" description="Cleavage; by viral protease" evidence="1">
    <location>
        <begin position="159"/>
        <end position="160"/>
    </location>
</feature>
<feature type="site" description="Cleavage; by viral protease" evidence="1">
    <location>
        <begin position="213"/>
        <end position="214"/>
    </location>
</feature>
<feature type="site" description="Cleavage; by viral protease" evidence="1">
    <location>
        <begin position="297"/>
        <end position="298"/>
    </location>
</feature>
<feature type="site" description="Cleavage; by viral protease" evidence="1">
    <location>
        <begin position="523"/>
        <end position="524"/>
    </location>
</feature>
<feature type="site" description="Cleavage; by viral protease" evidence="2">
    <location>
        <begin position="756"/>
        <end position="757"/>
    </location>
</feature>
<feature type="site" description="Cleavage; by viral protease" evidence="2">
    <location>
        <begin position="874"/>
        <end position="875"/>
    </location>
</feature>
<organismHost>
    <name type="scientific">Macaca mulatta</name>
    <name type="common">Rhesus macaque</name>
    <dbReference type="NCBI Taxonomy" id="9544"/>
</organismHost>
<proteinExistence type="inferred from homology"/>
<dbReference type="EC" id="3.6.1.23" evidence="2"/>
<dbReference type="EC" id="3.4.23.-" evidence="7"/>
<dbReference type="EMBL" id="M16605">
    <property type="status" value="NOT_ANNOTATED_CDS"/>
    <property type="molecule type" value="Genomic_RNA"/>
</dbReference>
<dbReference type="SMR" id="P51518"/>
<dbReference type="MEROPS" id="A02.009"/>
<dbReference type="Proteomes" id="UP000007229">
    <property type="component" value="Genome"/>
</dbReference>
<dbReference type="GO" id="GO:0019013">
    <property type="term" value="C:viral nucleocapsid"/>
    <property type="evidence" value="ECO:0007669"/>
    <property type="project" value="UniProtKB-KW"/>
</dbReference>
<dbReference type="GO" id="GO:0004190">
    <property type="term" value="F:aspartic-type endopeptidase activity"/>
    <property type="evidence" value="ECO:0007669"/>
    <property type="project" value="UniProtKB-KW"/>
</dbReference>
<dbReference type="GO" id="GO:0003677">
    <property type="term" value="F:DNA binding"/>
    <property type="evidence" value="ECO:0007669"/>
    <property type="project" value="UniProtKB-KW"/>
</dbReference>
<dbReference type="GO" id="GO:0004170">
    <property type="term" value="F:dUTP diphosphatase activity"/>
    <property type="evidence" value="ECO:0007669"/>
    <property type="project" value="UniProtKB-EC"/>
</dbReference>
<dbReference type="GO" id="GO:0039660">
    <property type="term" value="F:structural constituent of virion"/>
    <property type="evidence" value="ECO:0007669"/>
    <property type="project" value="UniProtKB-KW"/>
</dbReference>
<dbReference type="GO" id="GO:0008270">
    <property type="term" value="F:zinc ion binding"/>
    <property type="evidence" value="ECO:0007669"/>
    <property type="project" value="UniProtKB-KW"/>
</dbReference>
<dbReference type="GO" id="GO:0009117">
    <property type="term" value="P:nucleotide metabolic process"/>
    <property type="evidence" value="ECO:0007669"/>
    <property type="project" value="UniProtKB-KW"/>
</dbReference>
<dbReference type="GO" id="GO:0006508">
    <property type="term" value="P:proteolysis"/>
    <property type="evidence" value="ECO:0007669"/>
    <property type="project" value="UniProtKB-KW"/>
</dbReference>
<dbReference type="GO" id="GO:0075523">
    <property type="term" value="P:viral translational frameshifting"/>
    <property type="evidence" value="ECO:0007669"/>
    <property type="project" value="UniProtKB-KW"/>
</dbReference>
<dbReference type="CDD" id="cd05482">
    <property type="entry name" value="HIV_retropepsin_like"/>
    <property type="match status" value="1"/>
</dbReference>
<dbReference type="CDD" id="cd07557">
    <property type="entry name" value="trimeric_dUTPase"/>
    <property type="match status" value="1"/>
</dbReference>
<dbReference type="Gene3D" id="1.10.1200.30">
    <property type="match status" value="1"/>
</dbReference>
<dbReference type="Gene3D" id="2.70.40.10">
    <property type="match status" value="1"/>
</dbReference>
<dbReference type="Gene3D" id="2.40.70.10">
    <property type="entry name" value="Acid Proteases"/>
    <property type="match status" value="1"/>
</dbReference>
<dbReference type="Gene3D" id="1.10.375.10">
    <property type="entry name" value="Human Immunodeficiency Virus Type 1 Capsid Protein"/>
    <property type="match status" value="1"/>
</dbReference>
<dbReference type="Gene3D" id="1.10.150.490">
    <property type="entry name" value="Retroviral GAG p10 protein"/>
    <property type="match status" value="1"/>
</dbReference>
<dbReference type="Gene3D" id="4.10.60.10">
    <property type="entry name" value="Zinc finger, CCHC-type"/>
    <property type="match status" value="1"/>
</dbReference>
<dbReference type="InterPro" id="IPR001969">
    <property type="entry name" value="Aspartic_peptidase_AS"/>
</dbReference>
<dbReference type="InterPro" id="IPR003322">
    <property type="entry name" value="B_retro_matrix"/>
</dbReference>
<dbReference type="InterPro" id="IPR038124">
    <property type="entry name" value="B_retro_matrix_sf"/>
</dbReference>
<dbReference type="InterPro" id="IPR029054">
    <property type="entry name" value="dUTPase-like"/>
</dbReference>
<dbReference type="InterPro" id="IPR036157">
    <property type="entry name" value="dUTPase-like_sf"/>
</dbReference>
<dbReference type="InterPro" id="IPR033704">
    <property type="entry name" value="dUTPase_trimeric"/>
</dbReference>
<dbReference type="InterPro" id="IPR000467">
    <property type="entry name" value="G_patch_dom"/>
</dbReference>
<dbReference type="InterPro" id="IPR045345">
    <property type="entry name" value="Gag_p24_C"/>
</dbReference>
<dbReference type="InterPro" id="IPR001995">
    <property type="entry name" value="Peptidase_A2_cat"/>
</dbReference>
<dbReference type="InterPro" id="IPR021109">
    <property type="entry name" value="Peptidase_aspartic_dom_sf"/>
</dbReference>
<dbReference type="InterPro" id="IPR050195">
    <property type="entry name" value="Primate_lentivir_Gag_pol-like"/>
</dbReference>
<dbReference type="InterPro" id="IPR034170">
    <property type="entry name" value="Retropepsin-like_cat_dom"/>
</dbReference>
<dbReference type="InterPro" id="IPR018061">
    <property type="entry name" value="Retropepsins"/>
</dbReference>
<dbReference type="InterPro" id="IPR008916">
    <property type="entry name" value="Retrov_capsid_C"/>
</dbReference>
<dbReference type="InterPro" id="IPR008919">
    <property type="entry name" value="Retrov_capsid_N"/>
</dbReference>
<dbReference type="InterPro" id="IPR010999">
    <property type="entry name" value="Retrovr_matrix"/>
</dbReference>
<dbReference type="InterPro" id="IPR001878">
    <property type="entry name" value="Znf_CCHC"/>
</dbReference>
<dbReference type="InterPro" id="IPR036875">
    <property type="entry name" value="Znf_CCHC_sf"/>
</dbReference>
<dbReference type="PANTHER" id="PTHR40389">
    <property type="entry name" value="ENDOGENOUS RETROVIRUS GROUP K MEMBER 24 GAG POLYPROTEIN-RELATED"/>
    <property type="match status" value="1"/>
</dbReference>
<dbReference type="PANTHER" id="PTHR40389:SF3">
    <property type="entry name" value="IGE-BINDING PROTEIN"/>
    <property type="match status" value="1"/>
</dbReference>
<dbReference type="Pfam" id="PF00692">
    <property type="entry name" value="dUTPase"/>
    <property type="match status" value="1"/>
</dbReference>
<dbReference type="Pfam" id="PF01585">
    <property type="entry name" value="G-patch"/>
    <property type="match status" value="1"/>
</dbReference>
<dbReference type="Pfam" id="PF02337">
    <property type="entry name" value="Gag_p10"/>
    <property type="match status" value="1"/>
</dbReference>
<dbReference type="Pfam" id="PF00607">
    <property type="entry name" value="Gag_p24"/>
    <property type="match status" value="1"/>
</dbReference>
<dbReference type="Pfam" id="PF19317">
    <property type="entry name" value="Gag_p24_C"/>
    <property type="match status" value="1"/>
</dbReference>
<dbReference type="Pfam" id="PF00077">
    <property type="entry name" value="RVP"/>
    <property type="match status" value="1"/>
</dbReference>
<dbReference type="Pfam" id="PF00098">
    <property type="entry name" value="zf-CCHC"/>
    <property type="match status" value="1"/>
</dbReference>
<dbReference type="Pfam" id="PF14787">
    <property type="entry name" value="zf-CCHC_5"/>
    <property type="match status" value="1"/>
</dbReference>
<dbReference type="SMART" id="SM00443">
    <property type="entry name" value="G_patch"/>
    <property type="match status" value="1"/>
</dbReference>
<dbReference type="SMART" id="SM00343">
    <property type="entry name" value="ZnF_C2HC"/>
    <property type="match status" value="2"/>
</dbReference>
<dbReference type="SUPFAM" id="SSF50630">
    <property type="entry name" value="Acid proteases"/>
    <property type="match status" value="1"/>
</dbReference>
<dbReference type="SUPFAM" id="SSF51283">
    <property type="entry name" value="dUTPase-like"/>
    <property type="match status" value="1"/>
</dbReference>
<dbReference type="SUPFAM" id="SSF47836">
    <property type="entry name" value="Retroviral matrix proteins"/>
    <property type="match status" value="1"/>
</dbReference>
<dbReference type="SUPFAM" id="SSF47353">
    <property type="entry name" value="Retrovirus capsid dimerization domain-like"/>
    <property type="match status" value="1"/>
</dbReference>
<dbReference type="SUPFAM" id="SSF47943">
    <property type="entry name" value="Retrovirus capsid protein, N-terminal core domain"/>
    <property type="match status" value="1"/>
</dbReference>
<dbReference type="SUPFAM" id="SSF57756">
    <property type="entry name" value="Retrovirus zinc finger-like domains"/>
    <property type="match status" value="2"/>
</dbReference>
<dbReference type="PROSITE" id="PS50175">
    <property type="entry name" value="ASP_PROT_RETROV"/>
    <property type="match status" value="1"/>
</dbReference>
<dbReference type="PROSITE" id="PS00141">
    <property type="entry name" value="ASP_PROTEASE"/>
    <property type="match status" value="1"/>
</dbReference>
<dbReference type="PROSITE" id="PS50174">
    <property type="entry name" value="G_PATCH"/>
    <property type="match status" value="1"/>
</dbReference>
<dbReference type="PROSITE" id="PS50158">
    <property type="entry name" value="ZF_CCHC"/>
    <property type="match status" value="1"/>
</dbReference>
<keyword id="KW-0064">Aspartyl protease</keyword>
<keyword id="KW-0167">Capsid protein</keyword>
<keyword id="KW-0175">Coiled coil</keyword>
<keyword id="KW-0238">DNA-binding</keyword>
<keyword id="KW-0378">Hydrolase</keyword>
<keyword id="KW-0449">Lipoprotein</keyword>
<keyword id="KW-0460">Magnesium</keyword>
<keyword id="KW-0479">Metal-binding</keyword>
<keyword id="KW-0519">Myristate</keyword>
<keyword id="KW-0546">Nucleotide metabolism</keyword>
<keyword id="KW-0645">Protease</keyword>
<keyword id="KW-0677">Repeat</keyword>
<keyword id="KW-0688">Ribosomal frameshifting</keyword>
<keyword id="KW-0468">Viral matrix protein</keyword>
<keyword id="KW-0543">Viral nucleoprotein</keyword>
<keyword id="KW-0946">Virion</keyword>
<keyword id="KW-0862">Zinc</keyword>
<keyword id="KW-0863">Zinc-finger</keyword>
<evidence type="ECO:0000250" key="1">
    <source>
        <dbReference type="UniProtKB" id="P07567"/>
    </source>
</evidence>
<evidence type="ECO:0000250" key="2">
    <source>
        <dbReference type="UniProtKB" id="P07570"/>
    </source>
</evidence>
<evidence type="ECO:0000250" key="3">
    <source>
        <dbReference type="UniProtKB" id="P10258"/>
    </source>
</evidence>
<evidence type="ECO:0000255" key="4"/>
<evidence type="ECO:0000255" key="5">
    <source>
        <dbReference type="PROSITE-ProRule" id="PRU00047"/>
    </source>
</evidence>
<evidence type="ECO:0000255" key="6">
    <source>
        <dbReference type="PROSITE-ProRule" id="PRU00092"/>
    </source>
</evidence>
<evidence type="ECO:0000255" key="7">
    <source>
        <dbReference type="PROSITE-ProRule" id="PRU00275"/>
    </source>
</evidence>
<evidence type="ECO:0000256" key="8">
    <source>
        <dbReference type="SAM" id="MobiDB-lite"/>
    </source>
</evidence>
<evidence type="ECO:0000305" key="9"/>
<evidence type="ECO:0000305" key="10">
    <source>
    </source>
</evidence>
<organism>
    <name type="scientific">Simian retrovirus SRV-2</name>
    <dbReference type="NCBI Taxonomy" id="39068"/>
    <lineage>
        <taxon>Viruses</taxon>
        <taxon>Riboviria</taxon>
        <taxon>Pararnavirae</taxon>
        <taxon>Artverviricota</taxon>
        <taxon>Revtraviricetes</taxon>
        <taxon>Ortervirales</taxon>
        <taxon>Retroviridae</taxon>
        <taxon>Orthoretrovirinae</taxon>
        <taxon>Betaretrovirus</taxon>
        <taxon>Mason-Pfizer monkey virus</taxon>
    </lineage>
</organism>